<evidence type="ECO:0000250" key="1"/>
<evidence type="ECO:0000305" key="2"/>
<proteinExistence type="evidence at transcript level"/>
<protein>
    <recommendedName>
        <fullName>Cyclin-G1</fullName>
    </recommendedName>
</protein>
<reference key="1">
    <citation type="journal article" date="2005" name="BMC Genomics">
        <title>Characterization of 954 bovine full-CDS cDNA sequences.</title>
        <authorList>
            <person name="Harhay G.P."/>
            <person name="Sonstegard T.S."/>
            <person name="Keele J.W."/>
            <person name="Heaton M.P."/>
            <person name="Clawson M.L."/>
            <person name="Snelling W.M."/>
            <person name="Wiedmann R.T."/>
            <person name="Van Tassell C.P."/>
            <person name="Smith T.P.L."/>
        </authorList>
    </citation>
    <scope>NUCLEOTIDE SEQUENCE [LARGE SCALE MRNA]</scope>
</reference>
<reference key="2">
    <citation type="submission" date="2007-07" db="EMBL/GenBank/DDBJ databases">
        <authorList>
            <consortium name="NIH - Mammalian Gene Collection (MGC) project"/>
        </authorList>
    </citation>
    <scope>NUCLEOTIDE SEQUENCE [LARGE SCALE MRNA]</scope>
    <source>
        <strain>Crossbred X Angus</strain>
        <strain>Hereford</strain>
        <tissue>Hypothalamus</tissue>
        <tissue>Ileum</tissue>
    </source>
</reference>
<organism>
    <name type="scientific">Bos taurus</name>
    <name type="common">Bovine</name>
    <dbReference type="NCBI Taxonomy" id="9913"/>
    <lineage>
        <taxon>Eukaryota</taxon>
        <taxon>Metazoa</taxon>
        <taxon>Chordata</taxon>
        <taxon>Craniata</taxon>
        <taxon>Vertebrata</taxon>
        <taxon>Euteleostomi</taxon>
        <taxon>Mammalia</taxon>
        <taxon>Eutheria</taxon>
        <taxon>Laurasiatheria</taxon>
        <taxon>Artiodactyla</taxon>
        <taxon>Ruminantia</taxon>
        <taxon>Pecora</taxon>
        <taxon>Bovidae</taxon>
        <taxon>Bovinae</taxon>
        <taxon>Bos</taxon>
    </lineage>
</organism>
<feature type="chain" id="PRO_0000282331" description="Cyclin-G1">
    <location>
        <begin position="1"/>
        <end position="295"/>
    </location>
</feature>
<accession>Q5E9I1</accession>
<accession>A6QQV2</accession>
<gene>
    <name type="primary">CCNG1</name>
</gene>
<name>CCNG1_BOVIN</name>
<comment type="function">
    <text evidence="1">May play a role in growth regulation. Is associated with G2/M phase arrest in response to DNA damage. May be an intermediate by which p53 mediates its role as an inhibitor of cellular proliferation (By similarity).</text>
</comment>
<comment type="subcellular location">
    <subcellularLocation>
        <location evidence="1">Nucleus</location>
    </subcellularLocation>
</comment>
<comment type="similarity">
    <text evidence="2">Belongs to the cyclin family. Cyclin G subfamily.</text>
</comment>
<sequence length="295" mass="34107">MIEVLTTTDSQKLLHQLNALLEQELRCQPKVCGLRLIESAHDNGLRMTARLRDFEVKDLLSLTQFFGFDTETFSLAVNLLDRFLSKMKVQPKHLGCVGLSCFYLAVKSTEEERNVPLATDLIRISQYRFTVSDLMRMEKIVLEKVCWKVKATTAFQFLQLYYSLLQENVPHERKSSLNFERLEAQLKACYCRIIFSKAKPSVLALSIIALEIQAQKYIELTEGVERLQKHSKISGRDLTFWQELVSKCLAEYSSNKCAKPNVQKLKWIVSGRTARQLRHSYYRITHLPTIPETVP</sequence>
<keyword id="KW-0131">Cell cycle</keyword>
<keyword id="KW-0132">Cell division</keyword>
<keyword id="KW-0195">Cyclin</keyword>
<keyword id="KW-0498">Mitosis</keyword>
<keyword id="KW-0539">Nucleus</keyword>
<keyword id="KW-1185">Reference proteome</keyword>
<dbReference type="EMBL" id="BT020939">
    <property type="protein sequence ID" value="AAX08956.1"/>
    <property type="molecule type" value="mRNA"/>
</dbReference>
<dbReference type="EMBL" id="BT021183">
    <property type="protein sequence ID" value="AAX31365.1"/>
    <property type="molecule type" value="mRNA"/>
</dbReference>
<dbReference type="EMBL" id="BC102254">
    <property type="protein sequence ID" value="AAI02255.1"/>
    <property type="molecule type" value="mRNA"/>
</dbReference>
<dbReference type="EMBL" id="BC150004">
    <property type="protein sequence ID" value="AAI50005.1"/>
    <property type="molecule type" value="mRNA"/>
</dbReference>
<dbReference type="RefSeq" id="NP_001013382.1">
    <property type="nucleotide sequence ID" value="NM_001013364.1"/>
</dbReference>
<dbReference type="SMR" id="Q5E9I1"/>
<dbReference type="FunCoup" id="Q5E9I1">
    <property type="interactions" value="1916"/>
</dbReference>
<dbReference type="STRING" id="9913.ENSBTAP00000008669"/>
<dbReference type="PaxDb" id="9913-ENSBTAP00000008669"/>
<dbReference type="Ensembl" id="ENSBTAT00000008669.7">
    <property type="protein sequence ID" value="ENSBTAP00000008669.5"/>
    <property type="gene ID" value="ENSBTAG00000006607.7"/>
</dbReference>
<dbReference type="GeneID" id="281671"/>
<dbReference type="KEGG" id="bta:281671"/>
<dbReference type="CTD" id="900"/>
<dbReference type="VEuPathDB" id="HostDB:ENSBTAG00000006607"/>
<dbReference type="VGNC" id="VGNC:26969">
    <property type="gene designation" value="CCNG1"/>
</dbReference>
<dbReference type="eggNOG" id="KOG0653">
    <property type="taxonomic scope" value="Eukaryota"/>
</dbReference>
<dbReference type="GeneTree" id="ENSGT00940000154726"/>
<dbReference type="HOGENOM" id="CLU_062642_0_0_1"/>
<dbReference type="InParanoid" id="Q5E9I1"/>
<dbReference type="OMA" id="CFEAQEE"/>
<dbReference type="OrthoDB" id="769138at2759"/>
<dbReference type="TreeFam" id="TF101007"/>
<dbReference type="Reactome" id="R-BTA-6804757">
    <property type="pathway name" value="Regulation of TP53 Degradation"/>
</dbReference>
<dbReference type="Proteomes" id="UP000009136">
    <property type="component" value="Chromosome 7"/>
</dbReference>
<dbReference type="Bgee" id="ENSBTAG00000006607">
    <property type="expression patterns" value="Expressed in semimembranosus muscle and 105 other cell types or tissues"/>
</dbReference>
<dbReference type="GO" id="GO:0000307">
    <property type="term" value="C:cyclin-dependent protein kinase holoenzyme complex"/>
    <property type="evidence" value="ECO:0000318"/>
    <property type="project" value="GO_Central"/>
</dbReference>
<dbReference type="GO" id="GO:0005737">
    <property type="term" value="C:cytoplasm"/>
    <property type="evidence" value="ECO:0000318"/>
    <property type="project" value="GO_Central"/>
</dbReference>
<dbReference type="GO" id="GO:0005634">
    <property type="term" value="C:nucleus"/>
    <property type="evidence" value="ECO:0000318"/>
    <property type="project" value="GO_Central"/>
</dbReference>
<dbReference type="GO" id="GO:0016538">
    <property type="term" value="F:cyclin-dependent protein serine/threonine kinase regulator activity"/>
    <property type="evidence" value="ECO:0000318"/>
    <property type="project" value="GO_Central"/>
</dbReference>
<dbReference type="GO" id="GO:0051301">
    <property type="term" value="P:cell division"/>
    <property type="evidence" value="ECO:0007669"/>
    <property type="project" value="UniProtKB-KW"/>
</dbReference>
<dbReference type="GO" id="GO:0000082">
    <property type="term" value="P:G1/S transition of mitotic cell cycle"/>
    <property type="evidence" value="ECO:0000318"/>
    <property type="project" value="GO_Central"/>
</dbReference>
<dbReference type="CDD" id="cd20583">
    <property type="entry name" value="CYCLIN_CCNG1"/>
    <property type="match status" value="1"/>
</dbReference>
<dbReference type="FunFam" id="1.10.472.10:FF:000006">
    <property type="entry name" value="Cyclin I"/>
    <property type="match status" value="1"/>
</dbReference>
<dbReference type="Gene3D" id="1.10.472.10">
    <property type="entry name" value="Cyclin-like"/>
    <property type="match status" value="2"/>
</dbReference>
<dbReference type="InterPro" id="IPR039361">
    <property type="entry name" value="Cyclin"/>
</dbReference>
<dbReference type="InterPro" id="IPR013763">
    <property type="entry name" value="Cyclin-like_dom"/>
</dbReference>
<dbReference type="InterPro" id="IPR036915">
    <property type="entry name" value="Cyclin-like_sf"/>
</dbReference>
<dbReference type="InterPro" id="IPR006671">
    <property type="entry name" value="Cyclin_N"/>
</dbReference>
<dbReference type="PANTHER" id="PTHR10177">
    <property type="entry name" value="CYCLINS"/>
    <property type="match status" value="1"/>
</dbReference>
<dbReference type="Pfam" id="PF00134">
    <property type="entry name" value="Cyclin_N"/>
    <property type="match status" value="1"/>
</dbReference>
<dbReference type="SMART" id="SM00385">
    <property type="entry name" value="CYCLIN"/>
    <property type="match status" value="1"/>
</dbReference>
<dbReference type="SUPFAM" id="SSF47954">
    <property type="entry name" value="Cyclin-like"/>
    <property type="match status" value="1"/>
</dbReference>